<reference evidence="7" key="1">
    <citation type="submission" date="2006-12" db="EMBL/GenBank/DDBJ databases">
        <authorList>
            <consortium name="NIH - Xenopus Gene Collection (XGC) project"/>
        </authorList>
    </citation>
    <scope>NUCLEOTIDE SEQUENCE [LARGE SCALE MRNA]</scope>
    <source>
        <tissue evidence="7">Gastrula</tissue>
    </source>
</reference>
<reference evidence="6" key="2">
    <citation type="journal article" date="2006" name="J. Cell Biol.">
        <title>Xorbit/CLASP links dynamic microtubules to chromosomes in the Xenopus meiotic spindle.</title>
        <authorList>
            <person name="Hannak E."/>
            <person name="Heald R."/>
        </authorList>
    </citation>
    <scope>NUCLEOTIDE SEQUENCE [MRNA]</scope>
    <scope>FUNCTION</scope>
    <scope>INTERACTION WITH CLIP1 AND CENPE</scope>
    <scope>SUBCELLULAR LOCATION</scope>
</reference>
<dbReference type="EMBL" id="BC128690">
    <property type="protein sequence ID" value="AAI28691.1"/>
    <property type="molecule type" value="mRNA"/>
</dbReference>
<dbReference type="RefSeq" id="NP_001128506.1">
    <property type="nucleotide sequence ID" value="NM_001135034.1"/>
</dbReference>
<dbReference type="SMR" id="A1A5K2"/>
<dbReference type="GeneID" id="445862"/>
<dbReference type="KEGG" id="xla:445862"/>
<dbReference type="AGR" id="Xenbase:XB-GENE-6049836"/>
<dbReference type="CTD" id="445862"/>
<dbReference type="Xenbase" id="XB-GENE-6049836">
    <property type="gene designation" value="clasp1.S"/>
</dbReference>
<dbReference type="OMA" id="KMRHNWL"/>
<dbReference type="OrthoDB" id="46159at2759"/>
<dbReference type="Proteomes" id="UP000186698">
    <property type="component" value="Chromosome 9_10S"/>
</dbReference>
<dbReference type="Bgee" id="445862">
    <property type="expression patterns" value="Expressed in brain and 19 other cell types or tissues"/>
</dbReference>
<dbReference type="GO" id="GO:0045180">
    <property type="term" value="C:basal cortex"/>
    <property type="evidence" value="ECO:0000318"/>
    <property type="project" value="GO_Central"/>
</dbReference>
<dbReference type="GO" id="GO:0005813">
    <property type="term" value="C:centrosome"/>
    <property type="evidence" value="ECO:0007669"/>
    <property type="project" value="UniProtKB-SubCell"/>
</dbReference>
<dbReference type="GO" id="GO:0005881">
    <property type="term" value="C:cytoplasmic microtubule"/>
    <property type="evidence" value="ECO:0000318"/>
    <property type="project" value="GO_Central"/>
</dbReference>
<dbReference type="GO" id="GO:0005794">
    <property type="term" value="C:Golgi apparatus"/>
    <property type="evidence" value="ECO:0007669"/>
    <property type="project" value="UniProtKB-SubCell"/>
</dbReference>
<dbReference type="GO" id="GO:0000776">
    <property type="term" value="C:kinetochore"/>
    <property type="evidence" value="ECO:0000318"/>
    <property type="project" value="GO_Central"/>
</dbReference>
<dbReference type="GO" id="GO:0005815">
    <property type="term" value="C:microtubule organizing center"/>
    <property type="evidence" value="ECO:0000318"/>
    <property type="project" value="GO_Central"/>
</dbReference>
<dbReference type="GO" id="GO:0072686">
    <property type="term" value="C:mitotic spindle"/>
    <property type="evidence" value="ECO:0000318"/>
    <property type="project" value="GO_Central"/>
</dbReference>
<dbReference type="GO" id="GO:0005876">
    <property type="term" value="C:spindle microtubule"/>
    <property type="evidence" value="ECO:0000318"/>
    <property type="project" value="GO_Central"/>
</dbReference>
<dbReference type="GO" id="GO:0043515">
    <property type="term" value="F:kinetochore binding"/>
    <property type="evidence" value="ECO:0000318"/>
    <property type="project" value="GO_Central"/>
</dbReference>
<dbReference type="GO" id="GO:0008017">
    <property type="term" value="F:microtubule binding"/>
    <property type="evidence" value="ECO:0000318"/>
    <property type="project" value="GO_Central"/>
</dbReference>
<dbReference type="GO" id="GO:0051301">
    <property type="term" value="P:cell division"/>
    <property type="evidence" value="ECO:0007669"/>
    <property type="project" value="UniProtKB-KW"/>
</dbReference>
<dbReference type="GO" id="GO:0040001">
    <property type="term" value="P:establishment of mitotic spindle localization"/>
    <property type="evidence" value="ECO:0000318"/>
    <property type="project" value="GO_Central"/>
</dbReference>
<dbReference type="GO" id="GO:0034453">
    <property type="term" value="P:microtubule anchoring"/>
    <property type="evidence" value="ECO:0000250"/>
    <property type="project" value="UniProtKB"/>
</dbReference>
<dbReference type="GO" id="GO:0007020">
    <property type="term" value="P:microtubule nucleation"/>
    <property type="evidence" value="ECO:0000250"/>
    <property type="project" value="UniProtKB"/>
</dbReference>
<dbReference type="GO" id="GO:0031023">
    <property type="term" value="P:microtubule organizing center organization"/>
    <property type="evidence" value="ECO:0000250"/>
    <property type="project" value="UniProtKB"/>
</dbReference>
<dbReference type="GO" id="GO:0090307">
    <property type="term" value="P:mitotic spindle assembly"/>
    <property type="evidence" value="ECO:0000318"/>
    <property type="project" value="GO_Central"/>
</dbReference>
<dbReference type="GO" id="GO:0031110">
    <property type="term" value="P:regulation of microtubule polymerization or depolymerization"/>
    <property type="evidence" value="ECO:0007669"/>
    <property type="project" value="UniProtKB-ARBA"/>
</dbReference>
<dbReference type="GO" id="GO:1902903">
    <property type="term" value="P:regulation of supramolecular fiber organization"/>
    <property type="evidence" value="ECO:0007669"/>
    <property type="project" value="UniProtKB-ARBA"/>
</dbReference>
<dbReference type="FunFam" id="1.25.10.10:FF:000001">
    <property type="entry name" value="CLIP-associating protein 1 isoform 2"/>
    <property type="match status" value="1"/>
</dbReference>
<dbReference type="FunFam" id="1.25.10.10:FF:000005">
    <property type="entry name" value="CLIP-associating protein 1 isoform 2"/>
    <property type="match status" value="1"/>
</dbReference>
<dbReference type="FunFam" id="1.25.10.10:FF:000006">
    <property type="entry name" value="CLIP-associating protein 1 isoform 2"/>
    <property type="match status" value="1"/>
</dbReference>
<dbReference type="FunFam" id="1.25.10.10:FF:000031">
    <property type="entry name" value="CLIP-associating protein 1 isoform 2"/>
    <property type="match status" value="1"/>
</dbReference>
<dbReference type="Gene3D" id="1.25.10.10">
    <property type="entry name" value="Leucine-rich Repeat Variant"/>
    <property type="match status" value="4"/>
</dbReference>
<dbReference type="InterPro" id="IPR011989">
    <property type="entry name" value="ARM-like"/>
</dbReference>
<dbReference type="InterPro" id="IPR016024">
    <property type="entry name" value="ARM-type_fold"/>
</dbReference>
<dbReference type="InterPro" id="IPR024395">
    <property type="entry name" value="CLASP_N_dom"/>
</dbReference>
<dbReference type="InterPro" id="IPR021133">
    <property type="entry name" value="HEAT_type_2"/>
</dbReference>
<dbReference type="InterPro" id="IPR034085">
    <property type="entry name" value="TOG"/>
</dbReference>
<dbReference type="PANTHER" id="PTHR21567">
    <property type="entry name" value="CLASP"/>
    <property type="match status" value="1"/>
</dbReference>
<dbReference type="PANTHER" id="PTHR21567:SF28">
    <property type="entry name" value="CLIP-ASSOCIATING PROTEIN 1"/>
    <property type="match status" value="1"/>
</dbReference>
<dbReference type="Pfam" id="PF12348">
    <property type="entry name" value="CLASP_N"/>
    <property type="match status" value="2"/>
</dbReference>
<dbReference type="SMART" id="SM01349">
    <property type="entry name" value="TOG"/>
    <property type="match status" value="4"/>
</dbReference>
<dbReference type="SUPFAM" id="SSF48371">
    <property type="entry name" value="ARM repeat"/>
    <property type="match status" value="2"/>
</dbReference>
<dbReference type="PROSITE" id="PS50077">
    <property type="entry name" value="HEAT_REPEAT"/>
    <property type="match status" value="1"/>
</dbReference>
<organism>
    <name type="scientific">Xenopus laevis</name>
    <name type="common">African clawed frog</name>
    <dbReference type="NCBI Taxonomy" id="8355"/>
    <lineage>
        <taxon>Eukaryota</taxon>
        <taxon>Metazoa</taxon>
        <taxon>Chordata</taxon>
        <taxon>Craniata</taxon>
        <taxon>Vertebrata</taxon>
        <taxon>Euteleostomi</taxon>
        <taxon>Amphibia</taxon>
        <taxon>Batrachia</taxon>
        <taxon>Anura</taxon>
        <taxon>Pipoidea</taxon>
        <taxon>Pipidae</taxon>
        <taxon>Xenopodinae</taxon>
        <taxon>Xenopus</taxon>
        <taxon>Xenopus</taxon>
    </lineage>
</organism>
<gene>
    <name evidence="7" type="primary">clasp1b</name>
    <name evidence="8" type="synonym">clasp1</name>
</gene>
<name>CLA1B_XENLA</name>
<sequence length="1456" mass="161045">MEQGMDYWLGQIQQKDVGKRLQVGPDLIEYLLDRQKSIDLEQDQTLLDRMVDGLATSWVNSSNYKVALLGMDILSALVTRLQDRFRTQIGTVLPSLMDRLGDAKDSVRDQDQNLLIKIMEQASNPQYMWERMFSGFKHKNFRTREGVCLCLIATLNVYGANSLTLSKIVPHICNLLGDPNSQVRDAAINCLVEIYRHVGERVRADLSKKGLPQSRLNVIFTKFDEVQKSGTMILSTTDKNFDDEDSVDGNRPSSASSSASSKAPQTARRGVSLGTGRRPGTSSAAPKTGGTAKEGAGALDEEDFIRAFEDAPTVQIYSSRDLEESLNKIREILSDDKHDWEQRISALKKIRSLLLAGAAEYDNFFQQLRLLDGAFKLSAKDLRSQVVREACITLGHLSSVLGNKFDHGAEAVMPTVFNLVPNSTKIMATSGVVTIRLIIRHTHVPRLIPIITSNCTSKSVAVRRRCYEFLDLLLQEWQTHSLERHVSVLAETIKKGIHDADSEARIVARKCYWGFHGHFSKEAEQLFHALESSYQKALQSHLKNSDSIVSLPQSDRSSSSSQESLNRPLSAKRSPTGSTVSRATSKSTTGSLQRSRSDIDVNAAATSKTKAASGASTAPFSSVAALPPGSYASLGRIRTRRQSSGSTTSTASTPADTRGRSRAKVVSQSQPGSRSSSPGKLLGSSYGGIATGPQRVPQMPSEKRSKIPRSQGCSRETSPSRTVLDRFGISQPGRIPSAMRVLSSSTDLEAAVADALLLGDSRNKMKPVRRRYEPYGMYSDDDANSDASSACSERSYSSKNGGIPHYLRQTEDVAEVLNHCASSNWSERKEGLVGLQNLLKSQRLLSRVELKRLCEIFTRMFADPHSKRVFSMFLETLVDFVIIHKDDLQDWLFILLTQLLKKMGADLLGSVQAKVQKALDVTRDSFPFDQQFNILMRFIVDQTQTPNLKVKVAILKYIESLARQMDPTDFVNSSETRLAVSRIITWTTEPKSSDVRKAAQVVLISLFELNTPEFTMLLGALPKTFQDGATKLLHNHLKNSSNSSMGSPSNTIGRTPSRHSSSRASPLTSPTNCSHGGLSPSMLDYDTENLNSDEIYSSLRGVTEAIEKFSFRSQVDLNEPVRRDGKKESEMGSCDAGMASPASDLRGGTDMVEGGRMALDNKTSLLNTQPPRAFTGPRGREYNPYAYSDSINSYDKTALKEAVFDDDMDQLRDVPIDHSDLVADLLKELSNHNERVEERKGALCELLKITREDNLAVWEEHFKTILLLLLETLGDKDHAIRALALRVLREILRNQPARFKNYAELTIMKTLEAHKDSHKEVVRAAEEAASTLAGSIHPEQCIKVLCPIIQTADYPINLAAIKMQTKVIERISKESLHQILPDIIPGLLQGYDNTESSVRKASVFCLVAVYSVIGEELKPYLAQLTGSKMKLLNLYIKRAQTTNSNSSSSSDVSTHS</sequence>
<comment type="function">
    <text evidence="5">Microtubule plus-end tracking protein that promotes the stabilization of dynamic microtubules during anaphase. Plays a crucial role in chromatin-induced microtubule formation. May also act at microtubule minus ends. May be involved in the nucleation of noncentrosomal microtubules originating from the trans-Golgi network (TGN).</text>
</comment>
<comment type="subunit">
    <text evidence="5">Interacts (via C-terminus) with clip1/clip-170, and cenpe.</text>
</comment>
<comment type="subcellular location">
    <subcellularLocation>
        <location evidence="5">Cytoplasm</location>
        <location evidence="5">Cytoskeleton</location>
    </subcellularLocation>
    <subcellularLocation>
        <location evidence="5">Cytoplasm</location>
        <location evidence="5">Cytoskeleton</location>
        <location evidence="5">Microtubule organizing center</location>
        <location evidence="5">Centrosome</location>
    </subcellularLocation>
    <subcellularLocation>
        <location evidence="5">Chromosome</location>
        <location evidence="5">Centromere</location>
        <location evidence="5">Kinetochore</location>
    </subcellularLocation>
    <subcellularLocation>
        <location evidence="5">Cytoplasm</location>
        <location evidence="5">Cytoskeleton</location>
        <location evidence="5">Spindle</location>
    </subcellularLocation>
    <subcellularLocation>
        <location evidence="1">Golgi apparatus</location>
        <location evidence="1">trans-Golgi network</location>
    </subcellularLocation>
    <text>Localizes to microtubule plus ends. Associates with spindle microtubules, spindle poles, and kinetochores during metaphase, and shifts to the central spindle in late anaphase.</text>
</comment>
<comment type="similarity">
    <text evidence="3">Belongs to the CLASP family.</text>
</comment>
<keyword id="KW-0131">Cell cycle</keyword>
<keyword id="KW-0132">Cell division</keyword>
<keyword id="KW-0137">Centromere</keyword>
<keyword id="KW-0158">Chromosome</keyword>
<keyword id="KW-0963">Cytoplasm</keyword>
<keyword id="KW-0206">Cytoskeleton</keyword>
<keyword id="KW-0333">Golgi apparatus</keyword>
<keyword id="KW-0995">Kinetochore</keyword>
<keyword id="KW-0493">Microtubule</keyword>
<keyword id="KW-0498">Mitosis</keyword>
<keyword id="KW-1185">Reference proteome</keyword>
<keyword id="KW-0677">Repeat</keyword>
<proteinExistence type="evidence at protein level"/>
<evidence type="ECO:0000250" key="1"/>
<evidence type="ECO:0000250" key="2">
    <source>
        <dbReference type="UniProtKB" id="Q7Z460"/>
    </source>
</evidence>
<evidence type="ECO:0000255" key="3"/>
<evidence type="ECO:0000256" key="4">
    <source>
        <dbReference type="SAM" id="MobiDB-lite"/>
    </source>
</evidence>
<evidence type="ECO:0000269" key="5">
    <source>
    </source>
</evidence>
<evidence type="ECO:0000305" key="6"/>
<evidence type="ECO:0000312" key="7">
    <source>
        <dbReference type="EMBL" id="AAI28691.1"/>
    </source>
</evidence>
<evidence type="ECO:0000312" key="8">
    <source>
        <dbReference type="Xenbase" id="XB-GENE-6049836"/>
    </source>
</evidence>
<feature type="chain" id="PRO_0000397920" description="CLIP-associating protein 1-B">
    <location>
        <begin position="1"/>
        <end position="1456"/>
    </location>
</feature>
<feature type="repeat" description="HEAT 1" evidence="3">
    <location>
        <begin position="68"/>
        <end position="87"/>
    </location>
</feature>
<feature type="repeat" description="HEAT 2" evidence="3">
    <location>
        <begin position="88"/>
        <end position="124"/>
    </location>
</feature>
<feature type="repeat" description="HEAT 3" evidence="3">
    <location>
        <begin position="163"/>
        <end position="200"/>
    </location>
</feature>
<feature type="repeat" description="HEAT 4" evidence="3">
    <location>
        <begin position="442"/>
        <end position="479"/>
    </location>
</feature>
<feature type="repeat" description="HEAT 5" evidence="3">
    <location>
        <begin position="930"/>
        <end position="967"/>
    </location>
</feature>
<feature type="repeat" description="HEAT 6" evidence="3">
    <location>
        <begin position="1260"/>
        <end position="1297"/>
    </location>
</feature>
<feature type="repeat" description="HEAT 7" evidence="3">
    <location>
        <begin position="1378"/>
        <end position="1415"/>
    </location>
</feature>
<feature type="region of interest" description="Disordered" evidence="4">
    <location>
        <begin position="237"/>
        <end position="296"/>
    </location>
</feature>
<feature type="region of interest" description="Disordered" evidence="4">
    <location>
        <begin position="547"/>
        <end position="728"/>
    </location>
</feature>
<feature type="region of interest" description="Disordered" evidence="4">
    <location>
        <begin position="776"/>
        <end position="796"/>
    </location>
</feature>
<feature type="region of interest" description="Disordered" evidence="4">
    <location>
        <begin position="1037"/>
        <end position="1080"/>
    </location>
</feature>
<feature type="region of interest" description="Disordered" evidence="4">
    <location>
        <begin position="1121"/>
        <end position="1147"/>
    </location>
</feature>
<feature type="compositionally biased region" description="Low complexity" evidence="4">
    <location>
        <begin position="284"/>
        <end position="296"/>
    </location>
</feature>
<feature type="compositionally biased region" description="Low complexity" evidence="4">
    <location>
        <begin position="550"/>
        <end position="569"/>
    </location>
</feature>
<feature type="compositionally biased region" description="Polar residues" evidence="4">
    <location>
        <begin position="573"/>
        <end position="594"/>
    </location>
</feature>
<feature type="compositionally biased region" description="Low complexity" evidence="4">
    <location>
        <begin position="603"/>
        <end position="618"/>
    </location>
</feature>
<feature type="compositionally biased region" description="Low complexity" evidence="4">
    <location>
        <begin position="642"/>
        <end position="656"/>
    </location>
</feature>
<feature type="compositionally biased region" description="Low complexity" evidence="4">
    <location>
        <begin position="665"/>
        <end position="679"/>
    </location>
</feature>
<feature type="compositionally biased region" description="Polar residues" evidence="4">
    <location>
        <begin position="711"/>
        <end position="721"/>
    </location>
</feature>
<feature type="compositionally biased region" description="Low complexity" evidence="4">
    <location>
        <begin position="785"/>
        <end position="796"/>
    </location>
</feature>
<feature type="compositionally biased region" description="Low complexity" evidence="4">
    <location>
        <begin position="1038"/>
        <end position="1050"/>
    </location>
</feature>
<feature type="compositionally biased region" description="Polar residues" evidence="4">
    <location>
        <begin position="1062"/>
        <end position="1074"/>
    </location>
</feature>
<feature type="compositionally biased region" description="Basic and acidic residues" evidence="4">
    <location>
        <begin position="1121"/>
        <end position="1130"/>
    </location>
</feature>
<accession>A1A5K2</accession>
<protein>
    <recommendedName>
        <fullName evidence="2">CLIP-associating protein 1-B</fullName>
    </recommendedName>
    <alternativeName>
        <fullName evidence="8">Cytoplasmic linker-associated protein 1-B</fullName>
    </alternativeName>
    <alternativeName>
        <fullName>Protein Orbit homolog</fullName>
        <shortName>Xorbit</shortName>
        <shortName>Xorbit/CLASP</shortName>
    </alternativeName>
</protein>